<dbReference type="EMBL" id="AE017355">
    <property type="protein sequence ID" value="AAT63655.1"/>
    <property type="status" value="ALT_INIT"/>
    <property type="molecule type" value="Genomic_DNA"/>
</dbReference>
<dbReference type="RefSeq" id="WP_000082701.1">
    <property type="nucleotide sequence ID" value="NC_005957.1"/>
</dbReference>
<dbReference type="RefSeq" id="YP_038603.1">
    <property type="nucleotide sequence ID" value="NC_005957.1"/>
</dbReference>
<dbReference type="SMR" id="Q6HCX3"/>
<dbReference type="GeneID" id="93006559"/>
<dbReference type="KEGG" id="btk:BT9727_4288"/>
<dbReference type="PATRIC" id="fig|281309.8.peg.4570"/>
<dbReference type="HOGENOM" id="CLU_116623_4_0_9"/>
<dbReference type="Proteomes" id="UP000001301">
    <property type="component" value="Chromosome"/>
</dbReference>
<dbReference type="GO" id="GO:0032153">
    <property type="term" value="C:cell division site"/>
    <property type="evidence" value="ECO:0007669"/>
    <property type="project" value="TreeGrafter"/>
</dbReference>
<dbReference type="GO" id="GO:0030428">
    <property type="term" value="C:cell septum"/>
    <property type="evidence" value="ECO:0007669"/>
    <property type="project" value="TreeGrafter"/>
</dbReference>
<dbReference type="GO" id="GO:0005829">
    <property type="term" value="C:cytosol"/>
    <property type="evidence" value="ECO:0007669"/>
    <property type="project" value="TreeGrafter"/>
</dbReference>
<dbReference type="GO" id="GO:0005886">
    <property type="term" value="C:plasma membrane"/>
    <property type="evidence" value="ECO:0007669"/>
    <property type="project" value="UniProtKB-UniRule"/>
</dbReference>
<dbReference type="GO" id="GO:0000917">
    <property type="term" value="P:division septum assembly"/>
    <property type="evidence" value="ECO:0007669"/>
    <property type="project" value="UniProtKB-KW"/>
</dbReference>
<dbReference type="GO" id="GO:0043093">
    <property type="term" value="P:FtsZ-dependent cytokinesis"/>
    <property type="evidence" value="ECO:0007669"/>
    <property type="project" value="TreeGrafter"/>
</dbReference>
<dbReference type="GO" id="GO:0000921">
    <property type="term" value="P:septin ring assembly"/>
    <property type="evidence" value="ECO:0007669"/>
    <property type="project" value="TreeGrafter"/>
</dbReference>
<dbReference type="Gene3D" id="6.10.250.790">
    <property type="match status" value="1"/>
</dbReference>
<dbReference type="HAMAP" id="MF_02013">
    <property type="entry name" value="ZapA_type2"/>
    <property type="match status" value="1"/>
</dbReference>
<dbReference type="InterPro" id="IPR053712">
    <property type="entry name" value="Bac_CellDiv_Activator"/>
</dbReference>
<dbReference type="InterPro" id="IPR007838">
    <property type="entry name" value="Cell_div_ZapA-like"/>
</dbReference>
<dbReference type="InterPro" id="IPR036192">
    <property type="entry name" value="Cell_div_ZapA-like_sf"/>
</dbReference>
<dbReference type="InterPro" id="IPR023688">
    <property type="entry name" value="Cell_div_ZapA_firmicutes"/>
</dbReference>
<dbReference type="NCBIfam" id="NF010724">
    <property type="entry name" value="PRK14126.1"/>
    <property type="match status" value="1"/>
</dbReference>
<dbReference type="PANTHER" id="PTHR34981">
    <property type="entry name" value="CELL DIVISION PROTEIN ZAPA"/>
    <property type="match status" value="1"/>
</dbReference>
<dbReference type="PANTHER" id="PTHR34981:SF1">
    <property type="entry name" value="CELL DIVISION PROTEIN ZAPA"/>
    <property type="match status" value="1"/>
</dbReference>
<dbReference type="Pfam" id="PF05164">
    <property type="entry name" value="ZapA"/>
    <property type="match status" value="1"/>
</dbReference>
<dbReference type="SUPFAM" id="SSF102829">
    <property type="entry name" value="Cell division protein ZapA-like"/>
    <property type="match status" value="1"/>
</dbReference>
<comment type="function">
    <text evidence="1">Activator of cell division through the inhibition of FtsZ GTPase activity, therefore promoting FtsZ assembly into bundles of protofilaments necessary for the formation of the division Z ring. It is recruited early at mid-cell but it is not essential for cell division.</text>
</comment>
<comment type="subunit">
    <text evidence="1">Homodimer. Interacts with FtsZ.</text>
</comment>
<comment type="subcellular location">
    <subcellularLocation>
        <location evidence="1">Cytoplasm</location>
    </subcellularLocation>
    <text evidence="1">Localizes at mid-cell. In sporulating cells, localizes near the cell poles.</text>
</comment>
<comment type="similarity">
    <text evidence="1">Belongs to the ZapA family. Type 2 subfamily.</text>
</comment>
<comment type="sequence caution" evidence="2">
    <conflict type="erroneous initiation">
        <sequence resource="EMBL-CDS" id="AAT63655"/>
    </conflict>
</comment>
<accession>Q6HCX3</accession>
<organism>
    <name type="scientific">Bacillus thuringiensis subsp. konkukian (strain 97-27)</name>
    <dbReference type="NCBI Taxonomy" id="281309"/>
    <lineage>
        <taxon>Bacteria</taxon>
        <taxon>Bacillati</taxon>
        <taxon>Bacillota</taxon>
        <taxon>Bacilli</taxon>
        <taxon>Bacillales</taxon>
        <taxon>Bacillaceae</taxon>
        <taxon>Bacillus</taxon>
        <taxon>Bacillus cereus group</taxon>
    </lineage>
</organism>
<proteinExistence type="inferred from homology"/>
<feature type="chain" id="PRO_0000345683" description="Cell division protein ZapA">
    <location>
        <begin position="1"/>
        <end position="89"/>
    </location>
</feature>
<reference key="1">
    <citation type="journal article" date="2006" name="J. Bacteriol.">
        <title>Pathogenomic sequence analysis of Bacillus cereus and Bacillus thuringiensis isolates closely related to Bacillus anthracis.</title>
        <authorList>
            <person name="Han C.S."/>
            <person name="Xie G."/>
            <person name="Challacombe J.F."/>
            <person name="Altherr M.R."/>
            <person name="Bhotika S.S."/>
            <person name="Bruce D."/>
            <person name="Campbell C.S."/>
            <person name="Campbell M.L."/>
            <person name="Chen J."/>
            <person name="Chertkov O."/>
            <person name="Cleland C."/>
            <person name="Dimitrijevic M."/>
            <person name="Doggett N.A."/>
            <person name="Fawcett J.J."/>
            <person name="Glavina T."/>
            <person name="Goodwin L.A."/>
            <person name="Hill K.K."/>
            <person name="Hitchcock P."/>
            <person name="Jackson P.J."/>
            <person name="Keim P."/>
            <person name="Kewalramani A.R."/>
            <person name="Longmire J."/>
            <person name="Lucas S."/>
            <person name="Malfatti S."/>
            <person name="McMurry K."/>
            <person name="Meincke L.J."/>
            <person name="Misra M."/>
            <person name="Moseman B.L."/>
            <person name="Mundt M."/>
            <person name="Munk A.C."/>
            <person name="Okinaka R.T."/>
            <person name="Parson-Quintana B."/>
            <person name="Reilly L.P."/>
            <person name="Richardson P."/>
            <person name="Robinson D.L."/>
            <person name="Rubin E."/>
            <person name="Saunders E."/>
            <person name="Tapia R."/>
            <person name="Tesmer J.G."/>
            <person name="Thayer N."/>
            <person name="Thompson L.S."/>
            <person name="Tice H."/>
            <person name="Ticknor L.O."/>
            <person name="Wills P.L."/>
            <person name="Brettin T.S."/>
            <person name="Gilna P."/>
        </authorList>
    </citation>
    <scope>NUCLEOTIDE SEQUENCE [LARGE SCALE GENOMIC DNA]</scope>
    <source>
        <strain>97-27</strain>
    </source>
</reference>
<name>ZAPA_BACHK</name>
<keyword id="KW-0131">Cell cycle</keyword>
<keyword id="KW-0132">Cell division</keyword>
<keyword id="KW-0963">Cytoplasm</keyword>
<keyword id="KW-0717">Septation</keyword>
<protein>
    <recommendedName>
        <fullName evidence="1">Cell division protein ZapA</fullName>
    </recommendedName>
    <alternativeName>
        <fullName evidence="1">Z ring-associated protein ZapA</fullName>
    </alternativeName>
</protein>
<evidence type="ECO:0000255" key="1">
    <source>
        <dbReference type="HAMAP-Rule" id="MF_02013"/>
    </source>
</evidence>
<evidence type="ECO:0000305" key="2"/>
<gene>
    <name evidence="1" type="primary">zapA</name>
    <name type="ordered locus">BT9727_4288</name>
</gene>
<sequence>MSQQKGKKSRINVEIYGQQYSVVGDESTSHIRMVAAIVDDKMRELNAKNPSLDTSRLAVLTAVNVIHDYIKLKEEHEKLKESMTKKGME</sequence>